<name>LPXF_BACTN</name>
<accession>Q8A6M3</accession>
<protein>
    <recommendedName>
        <fullName evidence="5">Lipid A 4'-phosphatase</fullName>
        <ecNumber evidence="6">3.1.-.-</ecNumber>
    </recommendedName>
</protein>
<proteinExistence type="inferred from homology"/>
<reference key="1">
    <citation type="journal article" date="2003" name="Science">
        <title>A genomic view of the human-Bacteroides thetaiotaomicron symbiosis.</title>
        <authorList>
            <person name="Xu J."/>
            <person name="Bjursell M.K."/>
            <person name="Himrod J."/>
            <person name="Deng S."/>
            <person name="Carmichael L.K."/>
            <person name="Chiang H.C."/>
            <person name="Hooper L.V."/>
            <person name="Gordon J.I."/>
        </authorList>
    </citation>
    <scope>NUCLEOTIDE SEQUENCE [LARGE SCALE GENOMIC DNA]</scope>
    <source>
        <strain>ATCC 29148 / DSM 2079 / JCM 5827 / CCUG 10774 / NCTC 10582 / VPI-5482 / E50</strain>
    </source>
</reference>
<reference key="2">
    <citation type="journal article" date="2009" name="Proc. Natl. Acad. Sci. U.S.A.">
        <title>Characterizing a model human gut microbiota composed of members of its two dominant bacterial phyla.</title>
        <authorList>
            <person name="Mahowald M.A."/>
            <person name="Rey F.E."/>
            <person name="Seedorf H."/>
            <person name="Turnbaugh P.J."/>
            <person name="Fulton R.S."/>
            <person name="Wollam A."/>
            <person name="Shah N."/>
            <person name="Wang C."/>
            <person name="Magrini V."/>
            <person name="Wilson R.K."/>
            <person name="Cantarel B.L."/>
            <person name="Coutinho P.M."/>
            <person name="Henrissat B."/>
            <person name="Crock L.W."/>
            <person name="Russell A."/>
            <person name="Verberkmoes N.C."/>
            <person name="Hettich R.L."/>
            <person name="Gordon J.I."/>
        </authorList>
    </citation>
    <scope>NUCLEOTIDE SEQUENCE [LARGE SCALE GENOMIC DNA]</scope>
    <source>
        <strain>ATCC 29148 / DSM 2079 / JCM 5827 / CCUG 10774 / NCTC 10582 / VPI-5482 / E50</strain>
    </source>
</reference>
<reference key="3">
    <citation type="journal article" date="2011" name="Infect. Immun.">
        <title>The lipid A phosphate position determines differential host Toll-like receptor 4 responses to phylogenetically related symbiotic and pathogenic bacteria.</title>
        <authorList>
            <person name="Coats S.R."/>
            <person name="Berezow A.B."/>
            <person name="To T.T."/>
            <person name="Jain S."/>
            <person name="Bainbridge B.W."/>
            <person name="Banani K.P."/>
            <person name="Darveau R.P."/>
        </authorList>
    </citation>
    <scope>LIPID A STRUCTURE</scope>
    <source>
        <strain>ATCC 29148 / DSM 2079 / JCM 5827 / CCUG 10774 / NCTC 10582 / VPI-5482 / E50</strain>
    </source>
</reference>
<reference key="4">
    <citation type="journal article" date="2015" name="Science">
        <title>Gut microbiota. Antimicrobial peptide resistance mediates resilience of prominent gut commensals during inflammation.</title>
        <authorList>
            <person name="Cullen T.W."/>
            <person name="Schofield W.B."/>
            <person name="Barry N.A."/>
            <person name="Putnam E.E."/>
            <person name="Rundell E.A."/>
            <person name="Trent M.S."/>
            <person name="Degnan P.H."/>
            <person name="Booth C.J."/>
            <person name="Yu H."/>
            <person name="Goodman A.L."/>
        </authorList>
    </citation>
    <scope>FUNCTION</scope>
    <scope>DISRUPTION PHENOTYPE</scope>
    <scope>ANTIBIOTIC RESISTANCE</scope>
    <source>
        <strain>ATCC 29148 / DSM 2079 / JCM 5827 / CCUG 10774 / NCTC 10582 / VPI-5482 / E50</strain>
    </source>
</reference>
<feature type="chain" id="PRO_0000432494" description="Lipid A 4'-phosphatase">
    <location>
        <begin position="1"/>
        <end position="225"/>
    </location>
</feature>
<feature type="transmembrane region" description="Helical; Name=1" evidence="2">
    <location>
        <begin position="29"/>
        <end position="49"/>
    </location>
</feature>
<feature type="transmembrane region" description="Helical; Name=2" evidence="2">
    <location>
        <begin position="51"/>
        <end position="71"/>
    </location>
</feature>
<feature type="transmembrane region" description="Helical; Name=3" evidence="2">
    <location>
        <begin position="110"/>
        <end position="130"/>
    </location>
</feature>
<feature type="transmembrane region" description="Helical; Name=4" evidence="2">
    <location>
        <begin position="136"/>
        <end position="156"/>
    </location>
</feature>
<feature type="transmembrane region" description="Helical; Name=5" evidence="2">
    <location>
        <begin position="160"/>
        <end position="180"/>
    </location>
</feature>
<feature type="transmembrane region" description="Helical; Name=6" evidence="2">
    <location>
        <begin position="203"/>
        <end position="223"/>
    </location>
</feature>
<comment type="function">
    <text evidence="7">Probably removes the 4'-phosphate group from lipid A. Removal of this phosphate group confers resistance to cationic antimicrobial peptides (CAMPs), inflammation-associated peptides produced by the human host. This LPS modification helps maintain the stability of this commensal bacterium in gut microbiota.</text>
</comment>
<comment type="pathway">
    <text evidence="6">Bacterial outer membrane biogenesis; LPS lipid A biosynthesis.</text>
</comment>
<comment type="subcellular location">
    <subcellularLocation>
        <location evidence="1">Cell inner membrane</location>
        <topology evidence="2">Multi-pass membrane protein</topology>
    </subcellularLocation>
</comment>
<comment type="disruption phenotype">
    <text evidence="4">No visible phenotype in the absence of host gut inflammation. Loss of resistance to the cationic antimicrobial peptide polymyxin B (PMB). Lipid A is bi- rather than mono-phosphorylated, with mass corresponding to a 1- 4'-phosphorylated molecule. Increased negative charge on the cell surface leading to greater binding of PMB, increased outer membrane disruption by PMB. Decreased survival (fitness) in host (mouse) cells after infection with C.rodentium (a mouse enteropathogen that induces inflammation) or in mice subjected to other inflammation-producing stimuli.</text>
</comment>
<comment type="miscellaneous">
    <text evidence="3">In this organism the major lipid A structure is a pentaacylated disaccharide of glucosamine with a single phosphate at the 1- position.</text>
</comment>
<comment type="similarity">
    <text evidence="6">Belongs to the lipid A LpxF 4'-phosphatase family.</text>
</comment>
<evidence type="ECO:0000250" key="1">
    <source>
        <dbReference type="UniProtKB" id="A0Q4N6"/>
    </source>
</evidence>
<evidence type="ECO:0000255" key="2"/>
<evidence type="ECO:0000269" key="3">
    <source>
    </source>
</evidence>
<evidence type="ECO:0000269" key="4">
    <source>
    </source>
</evidence>
<evidence type="ECO:0000303" key="5">
    <source>
    </source>
</evidence>
<evidence type="ECO:0000305" key="6"/>
<evidence type="ECO:0000305" key="7">
    <source>
    </source>
</evidence>
<gene>
    <name evidence="5" type="primary">lpxF</name>
    <name type="ordered locus">BT_1854</name>
</gene>
<organism>
    <name type="scientific">Bacteroides thetaiotaomicron (strain ATCC 29148 / DSM 2079 / JCM 5827 / CCUG 10774 / NCTC 10582 / VPI-5482 / E50)</name>
    <dbReference type="NCBI Taxonomy" id="226186"/>
    <lineage>
        <taxon>Bacteria</taxon>
        <taxon>Pseudomonadati</taxon>
        <taxon>Bacteroidota</taxon>
        <taxon>Bacteroidia</taxon>
        <taxon>Bacteroidales</taxon>
        <taxon>Bacteroidaceae</taxon>
        <taxon>Bacteroides</taxon>
    </lineage>
</organism>
<sequence length="225" mass="25230">MIEFLSDIDTQLLLFFNGIHSPFWDYFMSAFTGKVIWVPMYASILYILLKNFHWKVALCYVVAIALTITFADQMCNSFLRPLVGRLRPSNPENPIADLVYIVNGRRGGGFGFPSCHAANSFGLAIFLICLFRKRWLSIFIVLWAFTNSYTRLYLGLHYPGDLVAGAIIGGFGGWLFYFIAHKLTARLQSDTPVPGKGAGMKQTEVMIYTGLLTLAGIIIYSIVQS</sequence>
<dbReference type="EC" id="3.1.-.-" evidence="6"/>
<dbReference type="EMBL" id="AE015928">
    <property type="protein sequence ID" value="AAO76961.1"/>
    <property type="molecule type" value="Genomic_DNA"/>
</dbReference>
<dbReference type="RefSeq" id="NP_810767.1">
    <property type="nucleotide sequence ID" value="NC_004663.1"/>
</dbReference>
<dbReference type="RefSeq" id="WP_011108022.1">
    <property type="nucleotide sequence ID" value="NC_004663.1"/>
</dbReference>
<dbReference type="SMR" id="Q8A6M3"/>
<dbReference type="FunCoup" id="Q8A6M3">
    <property type="interactions" value="154"/>
</dbReference>
<dbReference type="STRING" id="226186.BT_1854"/>
<dbReference type="PaxDb" id="226186-BT_1854"/>
<dbReference type="EnsemblBacteria" id="AAO76961">
    <property type="protein sequence ID" value="AAO76961"/>
    <property type="gene ID" value="BT_1854"/>
</dbReference>
<dbReference type="GeneID" id="60927842"/>
<dbReference type="KEGG" id="bth:BT_1854"/>
<dbReference type="PATRIC" id="fig|226186.12.peg.1904"/>
<dbReference type="eggNOG" id="COG0671">
    <property type="taxonomic scope" value="Bacteria"/>
</dbReference>
<dbReference type="HOGENOM" id="CLU_072573_10_0_10"/>
<dbReference type="InParanoid" id="Q8A6M3"/>
<dbReference type="OrthoDB" id="9789113at2"/>
<dbReference type="UniPathway" id="UPA00973"/>
<dbReference type="Proteomes" id="UP000001414">
    <property type="component" value="Chromosome"/>
</dbReference>
<dbReference type="GO" id="GO:0005886">
    <property type="term" value="C:plasma membrane"/>
    <property type="evidence" value="ECO:0007669"/>
    <property type="project" value="UniProtKB-SubCell"/>
</dbReference>
<dbReference type="GO" id="GO:0016787">
    <property type="term" value="F:hydrolase activity"/>
    <property type="evidence" value="ECO:0007669"/>
    <property type="project" value="UniProtKB-KW"/>
</dbReference>
<dbReference type="GO" id="GO:0009245">
    <property type="term" value="P:lipid A biosynthetic process"/>
    <property type="evidence" value="ECO:0007669"/>
    <property type="project" value="UniProtKB-UniPathway"/>
</dbReference>
<dbReference type="GO" id="GO:0009103">
    <property type="term" value="P:lipopolysaccharide biosynthetic process"/>
    <property type="evidence" value="ECO:0007669"/>
    <property type="project" value="UniProtKB-KW"/>
</dbReference>
<dbReference type="GO" id="GO:0046677">
    <property type="term" value="P:response to antibiotic"/>
    <property type="evidence" value="ECO:0007669"/>
    <property type="project" value="UniProtKB-KW"/>
</dbReference>
<dbReference type="CDD" id="cd03395">
    <property type="entry name" value="PAP2_like_4"/>
    <property type="match status" value="1"/>
</dbReference>
<dbReference type="Gene3D" id="1.20.144.10">
    <property type="entry name" value="Phosphatidic acid phosphatase type 2/haloperoxidase"/>
    <property type="match status" value="1"/>
</dbReference>
<dbReference type="InterPro" id="IPR036938">
    <property type="entry name" value="P_Acid_Pase_2/haloperoxi_sf"/>
</dbReference>
<dbReference type="InterPro" id="IPR000326">
    <property type="entry name" value="P_Acid_Pase_2/haloperoxidase"/>
</dbReference>
<dbReference type="PANTHER" id="PTHR14969:SF13">
    <property type="entry name" value="AT30094P"/>
    <property type="match status" value="1"/>
</dbReference>
<dbReference type="PANTHER" id="PTHR14969">
    <property type="entry name" value="SPHINGOSINE-1-PHOSPHATE PHOSPHOHYDROLASE"/>
    <property type="match status" value="1"/>
</dbReference>
<dbReference type="Pfam" id="PF01569">
    <property type="entry name" value="PAP2"/>
    <property type="match status" value="1"/>
</dbReference>
<dbReference type="SMART" id="SM00014">
    <property type="entry name" value="acidPPc"/>
    <property type="match status" value="1"/>
</dbReference>
<dbReference type="SUPFAM" id="SSF48317">
    <property type="entry name" value="Acid phosphatase/Vanadium-dependent haloperoxidase"/>
    <property type="match status" value="1"/>
</dbReference>
<keyword id="KW-0046">Antibiotic resistance</keyword>
<keyword id="KW-0997">Cell inner membrane</keyword>
<keyword id="KW-1003">Cell membrane</keyword>
<keyword id="KW-0378">Hydrolase</keyword>
<keyword id="KW-0441">Lipid A biosynthesis</keyword>
<keyword id="KW-0444">Lipid biosynthesis</keyword>
<keyword id="KW-0443">Lipid metabolism</keyword>
<keyword id="KW-0448">Lipopolysaccharide biosynthesis</keyword>
<keyword id="KW-0472">Membrane</keyword>
<keyword id="KW-1185">Reference proteome</keyword>
<keyword id="KW-0812">Transmembrane</keyword>
<keyword id="KW-1133">Transmembrane helix</keyword>